<protein>
    <recommendedName>
        <fullName evidence="1">Dihydroxy-acid dehydratase</fullName>
        <shortName evidence="1">DAD</shortName>
        <ecNumber evidence="1">4.2.1.9</ecNumber>
    </recommendedName>
</protein>
<evidence type="ECO:0000255" key="1">
    <source>
        <dbReference type="HAMAP-Rule" id="MF_00012"/>
    </source>
</evidence>
<sequence length="610" mass="64933">MPMYRSRTSTHGRNMAGARGLWRATGMTDGDFGKPIIAIVNSFTQFVPGHVHLKDLGQMVAREVEAAGGVAKEFNTIAVDDGIAMGHDGMLYSLPSREVIADSVEYMVNAHCADAMVCISNCDKITPGMLMAAMRLNIPAIFVSGGPMEAGKIDIADLEMTKIDLVDAMVAAANDKFTDEQVQHIEENACPTCGSCSGMFTANSMNCLAEALGLALPGNGSTLATHSDRKALFLEAGRRIVEITKRHYEGEEKGLLPREIATFEAFENAMSLDIAMGGSTNTVLHLLAIAHEGEVDFTMTDMDRLSRKVPCLCKVAPNTANVHMEDVHRAGGIFSILGELSRAGLLHDDCGTVHSASMGEAIAKWDIKVANNPEAESLFKAAPGGVRTTQAFSQSNRYKDLDTDREGGVIRSKEHAFSQDGGLAVLFGNIAEDGCIVKTAGVDASILQFTGTAHVCESQDDAVNNILTGKVKEGDVVVIRYEGPRGGPGMQEMLYPTSYLKSKGLGKACALLTDGRFSGGTSGLSIGHVSPEAAEGGTIGLVEDGDRIEIDIPNRRIHLAVSDEVLAARRAAQEAKGWHPAKPRKRKVSTALKAYAKLTTSAAKGAVRQV</sequence>
<proteinExistence type="inferred from homology"/>
<keyword id="KW-0001">2Fe-2S</keyword>
<keyword id="KW-0028">Amino-acid biosynthesis</keyword>
<keyword id="KW-0100">Branched-chain amino acid biosynthesis</keyword>
<keyword id="KW-0408">Iron</keyword>
<keyword id="KW-0411">Iron-sulfur</keyword>
<keyword id="KW-0456">Lyase</keyword>
<keyword id="KW-0460">Magnesium</keyword>
<keyword id="KW-0479">Metal-binding</keyword>
<keyword id="KW-1185">Reference proteome</keyword>
<accession>Q5LN98</accession>
<reference key="1">
    <citation type="journal article" date="2004" name="Nature">
        <title>Genome sequence of Silicibacter pomeroyi reveals adaptations to the marine environment.</title>
        <authorList>
            <person name="Moran M.A."/>
            <person name="Buchan A."/>
            <person name="Gonzalez J.M."/>
            <person name="Heidelberg J.F."/>
            <person name="Whitman W.B."/>
            <person name="Kiene R.P."/>
            <person name="Henriksen J.R."/>
            <person name="King G.M."/>
            <person name="Belas R."/>
            <person name="Fuqua C."/>
            <person name="Brinkac L.M."/>
            <person name="Lewis M."/>
            <person name="Johri S."/>
            <person name="Weaver B."/>
            <person name="Pai G."/>
            <person name="Eisen J.A."/>
            <person name="Rahe E."/>
            <person name="Sheldon W.M."/>
            <person name="Ye W."/>
            <person name="Miller T.R."/>
            <person name="Carlton J."/>
            <person name="Rasko D.A."/>
            <person name="Paulsen I.T."/>
            <person name="Ren Q."/>
            <person name="Daugherty S.C."/>
            <person name="DeBoy R.T."/>
            <person name="Dodson R.J."/>
            <person name="Durkin A.S."/>
            <person name="Madupu R."/>
            <person name="Nelson W.C."/>
            <person name="Sullivan S.A."/>
            <person name="Rosovitz M.J."/>
            <person name="Haft D.H."/>
            <person name="Selengut J."/>
            <person name="Ward N."/>
        </authorList>
    </citation>
    <scope>NUCLEOTIDE SEQUENCE [LARGE SCALE GENOMIC DNA]</scope>
    <source>
        <strain>ATCC 700808 / DSM 15171 / DSS-3</strain>
    </source>
</reference>
<reference key="2">
    <citation type="journal article" date="2014" name="Stand. Genomic Sci.">
        <title>An updated genome annotation for the model marine bacterium Ruegeria pomeroyi DSS-3.</title>
        <authorList>
            <person name="Rivers A.R."/>
            <person name="Smith C.B."/>
            <person name="Moran M.A."/>
        </authorList>
    </citation>
    <scope>GENOME REANNOTATION</scope>
    <source>
        <strain>ATCC 700808 / DSM 15171 / DSS-3</strain>
    </source>
</reference>
<gene>
    <name evidence="1" type="primary">ilvD</name>
    <name type="ordered locus">SPO3314</name>
</gene>
<name>ILVD_RUEPO</name>
<dbReference type="EC" id="4.2.1.9" evidence="1"/>
<dbReference type="EMBL" id="CP000031">
    <property type="protein sequence ID" value="AAV96541.1"/>
    <property type="molecule type" value="Genomic_DNA"/>
</dbReference>
<dbReference type="RefSeq" id="WP_011048997.1">
    <property type="nucleotide sequence ID" value="NC_003911.12"/>
</dbReference>
<dbReference type="SMR" id="Q5LN98"/>
<dbReference type="STRING" id="246200.SPO3314"/>
<dbReference type="PaxDb" id="246200-SPO3314"/>
<dbReference type="KEGG" id="sil:SPO3314"/>
<dbReference type="eggNOG" id="COG0129">
    <property type="taxonomic scope" value="Bacteria"/>
</dbReference>
<dbReference type="HOGENOM" id="CLU_014271_4_2_5"/>
<dbReference type="OrthoDB" id="9807077at2"/>
<dbReference type="UniPathway" id="UPA00047">
    <property type="reaction ID" value="UER00057"/>
</dbReference>
<dbReference type="UniPathway" id="UPA00049">
    <property type="reaction ID" value="UER00061"/>
</dbReference>
<dbReference type="Proteomes" id="UP000001023">
    <property type="component" value="Chromosome"/>
</dbReference>
<dbReference type="GO" id="GO:0005829">
    <property type="term" value="C:cytosol"/>
    <property type="evidence" value="ECO:0007669"/>
    <property type="project" value="TreeGrafter"/>
</dbReference>
<dbReference type="GO" id="GO:0051537">
    <property type="term" value="F:2 iron, 2 sulfur cluster binding"/>
    <property type="evidence" value="ECO:0007669"/>
    <property type="project" value="UniProtKB-UniRule"/>
</dbReference>
<dbReference type="GO" id="GO:0004160">
    <property type="term" value="F:dihydroxy-acid dehydratase activity"/>
    <property type="evidence" value="ECO:0007669"/>
    <property type="project" value="UniProtKB-UniRule"/>
</dbReference>
<dbReference type="GO" id="GO:0000287">
    <property type="term" value="F:magnesium ion binding"/>
    <property type="evidence" value="ECO:0007669"/>
    <property type="project" value="UniProtKB-UniRule"/>
</dbReference>
<dbReference type="GO" id="GO:0009097">
    <property type="term" value="P:isoleucine biosynthetic process"/>
    <property type="evidence" value="ECO:0007669"/>
    <property type="project" value="UniProtKB-UniRule"/>
</dbReference>
<dbReference type="GO" id="GO:0009099">
    <property type="term" value="P:L-valine biosynthetic process"/>
    <property type="evidence" value="ECO:0007669"/>
    <property type="project" value="UniProtKB-UniRule"/>
</dbReference>
<dbReference type="FunFam" id="3.50.30.80:FF:000001">
    <property type="entry name" value="Dihydroxy-acid dehydratase"/>
    <property type="match status" value="1"/>
</dbReference>
<dbReference type="Gene3D" id="3.50.30.80">
    <property type="entry name" value="IlvD/EDD C-terminal domain-like"/>
    <property type="match status" value="1"/>
</dbReference>
<dbReference type="HAMAP" id="MF_00012">
    <property type="entry name" value="IlvD"/>
    <property type="match status" value="1"/>
</dbReference>
<dbReference type="InterPro" id="IPR042096">
    <property type="entry name" value="Dihydro-acid_dehy_C"/>
</dbReference>
<dbReference type="InterPro" id="IPR004404">
    <property type="entry name" value="DihydroxyA_deHydtase"/>
</dbReference>
<dbReference type="InterPro" id="IPR020558">
    <property type="entry name" value="DiOHA_6PGluconate_deHydtase_CS"/>
</dbReference>
<dbReference type="InterPro" id="IPR056740">
    <property type="entry name" value="ILV_EDD_C"/>
</dbReference>
<dbReference type="InterPro" id="IPR000581">
    <property type="entry name" value="ILV_EDD_N"/>
</dbReference>
<dbReference type="InterPro" id="IPR037237">
    <property type="entry name" value="IlvD/EDD_N"/>
</dbReference>
<dbReference type="NCBIfam" id="TIGR00110">
    <property type="entry name" value="ilvD"/>
    <property type="match status" value="1"/>
</dbReference>
<dbReference type="NCBIfam" id="NF009103">
    <property type="entry name" value="PRK12448.1"/>
    <property type="match status" value="1"/>
</dbReference>
<dbReference type="PANTHER" id="PTHR43661">
    <property type="entry name" value="D-XYLONATE DEHYDRATASE"/>
    <property type="match status" value="1"/>
</dbReference>
<dbReference type="PANTHER" id="PTHR43661:SF3">
    <property type="entry name" value="D-XYLONATE DEHYDRATASE YAGF-RELATED"/>
    <property type="match status" value="1"/>
</dbReference>
<dbReference type="Pfam" id="PF24877">
    <property type="entry name" value="ILV_EDD_C"/>
    <property type="match status" value="1"/>
</dbReference>
<dbReference type="Pfam" id="PF00920">
    <property type="entry name" value="ILVD_EDD_N"/>
    <property type="match status" value="1"/>
</dbReference>
<dbReference type="SUPFAM" id="SSF143975">
    <property type="entry name" value="IlvD/EDD N-terminal domain-like"/>
    <property type="match status" value="1"/>
</dbReference>
<dbReference type="SUPFAM" id="SSF52016">
    <property type="entry name" value="LeuD/IlvD-like"/>
    <property type="match status" value="1"/>
</dbReference>
<dbReference type="PROSITE" id="PS00886">
    <property type="entry name" value="ILVD_EDD_1"/>
    <property type="match status" value="1"/>
</dbReference>
<dbReference type="PROSITE" id="PS00887">
    <property type="entry name" value="ILVD_EDD_2"/>
    <property type="match status" value="1"/>
</dbReference>
<feature type="chain" id="PRO_0000225424" description="Dihydroxy-acid dehydratase">
    <location>
        <begin position="1"/>
        <end position="610"/>
    </location>
</feature>
<feature type="active site" description="Proton acceptor" evidence="1">
    <location>
        <position position="518"/>
    </location>
</feature>
<feature type="binding site" evidence="1">
    <location>
        <position position="81"/>
    </location>
    <ligand>
        <name>Mg(2+)</name>
        <dbReference type="ChEBI" id="CHEBI:18420"/>
    </ligand>
</feature>
<feature type="binding site" evidence="1">
    <location>
        <position position="122"/>
    </location>
    <ligand>
        <name>[2Fe-2S] cluster</name>
        <dbReference type="ChEBI" id="CHEBI:190135"/>
    </ligand>
</feature>
<feature type="binding site" evidence="1">
    <location>
        <position position="123"/>
    </location>
    <ligand>
        <name>Mg(2+)</name>
        <dbReference type="ChEBI" id="CHEBI:18420"/>
    </ligand>
</feature>
<feature type="binding site" description="via carbamate group" evidence="1">
    <location>
        <position position="124"/>
    </location>
    <ligand>
        <name>Mg(2+)</name>
        <dbReference type="ChEBI" id="CHEBI:18420"/>
    </ligand>
</feature>
<feature type="binding site" evidence="1">
    <location>
        <position position="196"/>
    </location>
    <ligand>
        <name>[2Fe-2S] cluster</name>
        <dbReference type="ChEBI" id="CHEBI:190135"/>
    </ligand>
</feature>
<feature type="binding site" evidence="1">
    <location>
        <position position="492"/>
    </location>
    <ligand>
        <name>Mg(2+)</name>
        <dbReference type="ChEBI" id="CHEBI:18420"/>
    </ligand>
</feature>
<feature type="modified residue" description="N6-carboxylysine" evidence="1">
    <location>
        <position position="124"/>
    </location>
</feature>
<comment type="function">
    <text evidence="1">Functions in the biosynthesis of branched-chain amino acids. Catalyzes the dehydration of (2R,3R)-2,3-dihydroxy-3-methylpentanoate (2,3-dihydroxy-3-methylvalerate) into 2-oxo-3-methylpentanoate (2-oxo-3-methylvalerate) and of (2R)-2,3-dihydroxy-3-methylbutanoate (2,3-dihydroxyisovalerate) into 2-oxo-3-methylbutanoate (2-oxoisovalerate), the penultimate precursor to L-isoleucine and L-valine, respectively.</text>
</comment>
<comment type="catalytic activity">
    <reaction evidence="1">
        <text>(2R)-2,3-dihydroxy-3-methylbutanoate = 3-methyl-2-oxobutanoate + H2O</text>
        <dbReference type="Rhea" id="RHEA:24809"/>
        <dbReference type="ChEBI" id="CHEBI:11851"/>
        <dbReference type="ChEBI" id="CHEBI:15377"/>
        <dbReference type="ChEBI" id="CHEBI:49072"/>
        <dbReference type="EC" id="4.2.1.9"/>
    </reaction>
    <physiologicalReaction direction="left-to-right" evidence="1">
        <dbReference type="Rhea" id="RHEA:24810"/>
    </physiologicalReaction>
</comment>
<comment type="catalytic activity">
    <reaction evidence="1">
        <text>(2R,3R)-2,3-dihydroxy-3-methylpentanoate = (S)-3-methyl-2-oxopentanoate + H2O</text>
        <dbReference type="Rhea" id="RHEA:27694"/>
        <dbReference type="ChEBI" id="CHEBI:15377"/>
        <dbReference type="ChEBI" id="CHEBI:35146"/>
        <dbReference type="ChEBI" id="CHEBI:49258"/>
        <dbReference type="EC" id="4.2.1.9"/>
    </reaction>
    <physiologicalReaction direction="left-to-right" evidence="1">
        <dbReference type="Rhea" id="RHEA:27695"/>
    </physiologicalReaction>
</comment>
<comment type="cofactor">
    <cofactor evidence="1">
        <name>[2Fe-2S] cluster</name>
        <dbReference type="ChEBI" id="CHEBI:190135"/>
    </cofactor>
    <text evidence="1">Binds 1 [2Fe-2S] cluster per subunit. This cluster acts as a Lewis acid cofactor.</text>
</comment>
<comment type="cofactor">
    <cofactor evidence="1">
        <name>Mg(2+)</name>
        <dbReference type="ChEBI" id="CHEBI:18420"/>
    </cofactor>
</comment>
<comment type="pathway">
    <text evidence="1">Amino-acid biosynthesis; L-isoleucine biosynthesis; L-isoleucine from 2-oxobutanoate: step 3/4.</text>
</comment>
<comment type="pathway">
    <text evidence="1">Amino-acid biosynthesis; L-valine biosynthesis; L-valine from pyruvate: step 3/4.</text>
</comment>
<comment type="subunit">
    <text evidence="1">Homodimer.</text>
</comment>
<comment type="similarity">
    <text evidence="1">Belongs to the IlvD/Edd family.</text>
</comment>
<organism>
    <name type="scientific">Ruegeria pomeroyi (strain ATCC 700808 / DSM 15171 / DSS-3)</name>
    <name type="common">Silicibacter pomeroyi</name>
    <dbReference type="NCBI Taxonomy" id="246200"/>
    <lineage>
        <taxon>Bacteria</taxon>
        <taxon>Pseudomonadati</taxon>
        <taxon>Pseudomonadota</taxon>
        <taxon>Alphaproteobacteria</taxon>
        <taxon>Rhodobacterales</taxon>
        <taxon>Roseobacteraceae</taxon>
        <taxon>Ruegeria</taxon>
    </lineage>
</organism>